<name>QUEA_ECOSM</name>
<evidence type="ECO:0000255" key="1">
    <source>
        <dbReference type="HAMAP-Rule" id="MF_00113"/>
    </source>
</evidence>
<reference key="1">
    <citation type="journal article" date="2008" name="J. Bacteriol.">
        <title>Insights into the environmental resistance gene pool from the genome sequence of the multidrug-resistant environmental isolate Escherichia coli SMS-3-5.</title>
        <authorList>
            <person name="Fricke W.F."/>
            <person name="Wright M.S."/>
            <person name="Lindell A.H."/>
            <person name="Harkins D.M."/>
            <person name="Baker-Austin C."/>
            <person name="Ravel J."/>
            <person name="Stepanauskas R."/>
        </authorList>
    </citation>
    <scope>NUCLEOTIDE SEQUENCE [LARGE SCALE GENOMIC DNA]</scope>
    <source>
        <strain>SMS-3-5 / SECEC</strain>
    </source>
</reference>
<gene>
    <name evidence="1" type="primary">queA</name>
    <name type="ordered locus">EcSMS35_0437</name>
</gene>
<proteinExistence type="inferred from homology"/>
<comment type="function">
    <text evidence="1">Transfers and isomerizes the ribose moiety from AdoMet to the 7-aminomethyl group of 7-deazaguanine (preQ1-tRNA) to give epoxyqueuosine (oQ-tRNA).</text>
</comment>
<comment type="catalytic activity">
    <reaction evidence="1">
        <text>7-aminomethyl-7-carbaguanosine(34) in tRNA + S-adenosyl-L-methionine = epoxyqueuosine(34) in tRNA + adenine + L-methionine + 2 H(+)</text>
        <dbReference type="Rhea" id="RHEA:32155"/>
        <dbReference type="Rhea" id="RHEA-COMP:10342"/>
        <dbReference type="Rhea" id="RHEA-COMP:18582"/>
        <dbReference type="ChEBI" id="CHEBI:15378"/>
        <dbReference type="ChEBI" id="CHEBI:16708"/>
        <dbReference type="ChEBI" id="CHEBI:57844"/>
        <dbReference type="ChEBI" id="CHEBI:59789"/>
        <dbReference type="ChEBI" id="CHEBI:82833"/>
        <dbReference type="ChEBI" id="CHEBI:194443"/>
        <dbReference type="EC" id="2.4.99.17"/>
    </reaction>
</comment>
<comment type="pathway">
    <text evidence="1">tRNA modification; tRNA-queuosine biosynthesis.</text>
</comment>
<comment type="subunit">
    <text evidence="1">Monomer.</text>
</comment>
<comment type="subcellular location">
    <subcellularLocation>
        <location evidence="1">Cytoplasm</location>
    </subcellularLocation>
</comment>
<comment type="similarity">
    <text evidence="1">Belongs to the QueA family.</text>
</comment>
<sequence length="356" mass="39417">MRVTDFSFELPESLIAHYPMPERSSCRLLSLDGPTGALTHGTFTDLLDKLNPGDLLVFNNTRVIPARLFGRKASGGKIEVLVERMLDDKRILAHIRASKAPKPGAELLLGDDESINATMTARHGALFEVEFNDDRSVLDILNSIGHMPLPPYIDRPDEDADRELYQTVYSEKPGAVAAPTAGLHFDEPLLEKLRAKGVEMAFVTLHVGAGTFQPVRVDTIEDHIMHSEYAEVPQDVVDAVLAAKARGNRVIAVGTTSVRSLESAAQAAKNDLIEPFFDDTQIFIYPGFQYKVVDALVTNFHLPESTLIMLVSAFAGYQHTMNAYKAAVEEKYRFFSYGDAMFITYNPQAINERVGE</sequence>
<feature type="chain" id="PRO_1000117533" description="S-adenosylmethionine:tRNA ribosyltransferase-isomerase">
    <location>
        <begin position="1"/>
        <end position="356"/>
    </location>
</feature>
<dbReference type="EC" id="2.4.99.17" evidence="1"/>
<dbReference type="EMBL" id="CP000970">
    <property type="protein sequence ID" value="ACB18117.1"/>
    <property type="molecule type" value="Genomic_DNA"/>
</dbReference>
<dbReference type="RefSeq" id="WP_001266492.1">
    <property type="nucleotide sequence ID" value="NC_010498.1"/>
</dbReference>
<dbReference type="SMR" id="B1LJF3"/>
<dbReference type="GeneID" id="75170422"/>
<dbReference type="KEGG" id="ecm:EcSMS35_0437"/>
<dbReference type="HOGENOM" id="CLU_039110_1_0_6"/>
<dbReference type="UniPathway" id="UPA00392"/>
<dbReference type="Proteomes" id="UP000007011">
    <property type="component" value="Chromosome"/>
</dbReference>
<dbReference type="GO" id="GO:0005737">
    <property type="term" value="C:cytoplasm"/>
    <property type="evidence" value="ECO:0007669"/>
    <property type="project" value="UniProtKB-SubCell"/>
</dbReference>
<dbReference type="GO" id="GO:0051075">
    <property type="term" value="F:S-adenosylmethionine:tRNA ribosyltransferase-isomerase activity"/>
    <property type="evidence" value="ECO:0007669"/>
    <property type="project" value="UniProtKB-EC"/>
</dbReference>
<dbReference type="GO" id="GO:0008616">
    <property type="term" value="P:queuosine biosynthetic process"/>
    <property type="evidence" value="ECO:0007669"/>
    <property type="project" value="UniProtKB-UniRule"/>
</dbReference>
<dbReference type="GO" id="GO:0002099">
    <property type="term" value="P:tRNA wobble guanine modification"/>
    <property type="evidence" value="ECO:0007669"/>
    <property type="project" value="TreeGrafter"/>
</dbReference>
<dbReference type="FunFam" id="2.40.10.240:FF:000001">
    <property type="entry name" value="S-adenosylmethionine:tRNA ribosyltransferase-isomerase"/>
    <property type="match status" value="1"/>
</dbReference>
<dbReference type="FunFam" id="3.40.1780.10:FF:000001">
    <property type="entry name" value="S-adenosylmethionine:tRNA ribosyltransferase-isomerase"/>
    <property type="match status" value="1"/>
</dbReference>
<dbReference type="Gene3D" id="2.40.10.240">
    <property type="entry name" value="QueA-like"/>
    <property type="match status" value="1"/>
</dbReference>
<dbReference type="Gene3D" id="3.40.1780.10">
    <property type="entry name" value="QueA-like"/>
    <property type="match status" value="1"/>
</dbReference>
<dbReference type="HAMAP" id="MF_00113">
    <property type="entry name" value="QueA"/>
    <property type="match status" value="1"/>
</dbReference>
<dbReference type="InterPro" id="IPR003699">
    <property type="entry name" value="QueA"/>
</dbReference>
<dbReference type="InterPro" id="IPR042118">
    <property type="entry name" value="QueA_dom1"/>
</dbReference>
<dbReference type="InterPro" id="IPR042119">
    <property type="entry name" value="QueA_dom2"/>
</dbReference>
<dbReference type="InterPro" id="IPR036100">
    <property type="entry name" value="QueA_sf"/>
</dbReference>
<dbReference type="NCBIfam" id="NF001140">
    <property type="entry name" value="PRK00147.1"/>
    <property type="match status" value="1"/>
</dbReference>
<dbReference type="NCBIfam" id="TIGR00113">
    <property type="entry name" value="queA"/>
    <property type="match status" value="1"/>
</dbReference>
<dbReference type="PANTHER" id="PTHR30307">
    <property type="entry name" value="S-ADENOSYLMETHIONINE:TRNA RIBOSYLTRANSFERASE-ISOMERASE"/>
    <property type="match status" value="1"/>
</dbReference>
<dbReference type="PANTHER" id="PTHR30307:SF0">
    <property type="entry name" value="S-ADENOSYLMETHIONINE:TRNA RIBOSYLTRANSFERASE-ISOMERASE"/>
    <property type="match status" value="1"/>
</dbReference>
<dbReference type="Pfam" id="PF02547">
    <property type="entry name" value="Queuosine_synth"/>
    <property type="match status" value="1"/>
</dbReference>
<dbReference type="SUPFAM" id="SSF111337">
    <property type="entry name" value="QueA-like"/>
    <property type="match status" value="1"/>
</dbReference>
<accession>B1LJF3</accession>
<protein>
    <recommendedName>
        <fullName evidence="1">S-adenosylmethionine:tRNA ribosyltransferase-isomerase</fullName>
        <ecNumber evidence="1">2.4.99.17</ecNumber>
    </recommendedName>
    <alternativeName>
        <fullName evidence="1">Queuosine biosynthesis protein QueA</fullName>
    </alternativeName>
</protein>
<organism>
    <name type="scientific">Escherichia coli (strain SMS-3-5 / SECEC)</name>
    <dbReference type="NCBI Taxonomy" id="439855"/>
    <lineage>
        <taxon>Bacteria</taxon>
        <taxon>Pseudomonadati</taxon>
        <taxon>Pseudomonadota</taxon>
        <taxon>Gammaproteobacteria</taxon>
        <taxon>Enterobacterales</taxon>
        <taxon>Enterobacteriaceae</taxon>
        <taxon>Escherichia</taxon>
    </lineage>
</organism>
<keyword id="KW-0963">Cytoplasm</keyword>
<keyword id="KW-0671">Queuosine biosynthesis</keyword>
<keyword id="KW-0949">S-adenosyl-L-methionine</keyword>
<keyword id="KW-0808">Transferase</keyword>